<accession>Q3BAQ2</accession>
<comment type="function">
    <text evidence="1">DNA-dependent RNA polymerase catalyzes the transcription of DNA into RNA using the four ribonucleoside triphosphates as substrates.</text>
</comment>
<comment type="catalytic activity">
    <reaction evidence="1">
        <text>RNA(n) + a ribonucleoside 5'-triphosphate = RNA(n+1) + diphosphate</text>
        <dbReference type="Rhea" id="RHEA:21248"/>
        <dbReference type="Rhea" id="RHEA-COMP:14527"/>
        <dbReference type="Rhea" id="RHEA-COMP:17342"/>
        <dbReference type="ChEBI" id="CHEBI:33019"/>
        <dbReference type="ChEBI" id="CHEBI:61557"/>
        <dbReference type="ChEBI" id="CHEBI:140395"/>
        <dbReference type="EC" id="2.7.7.6"/>
    </reaction>
</comment>
<comment type="cofactor">
    <cofactor evidence="1">
        <name>Zn(2+)</name>
        <dbReference type="ChEBI" id="CHEBI:29105"/>
    </cofactor>
    <text evidence="1">Binds 1 Zn(2+) ion per subunit.</text>
</comment>
<comment type="subunit">
    <text evidence="1">In plastids the minimal PEP RNA polymerase catalytic core is composed of four subunits: alpha, beta, beta', and beta''. When a (nuclear-encoded) sigma factor is associated with the core the holoenzyme is formed, which can initiate transcription.</text>
</comment>
<comment type="subcellular location">
    <subcellularLocation>
        <location evidence="1">Plastid</location>
        <location evidence="1">Chloroplast</location>
    </subcellularLocation>
</comment>
<comment type="similarity">
    <text evidence="1">Belongs to the RNA polymerase beta' chain family. RpoC2 subfamily.</text>
</comment>
<protein>
    <recommendedName>
        <fullName evidence="1">DNA-directed RNA polymerase subunit beta''</fullName>
        <ecNumber evidence="1">2.7.7.6</ecNumber>
    </recommendedName>
    <alternativeName>
        <fullName evidence="1">PEP</fullName>
    </alternativeName>
    <alternativeName>
        <fullName evidence="1">Plastid-encoded RNA polymerase subunit beta''</fullName>
        <shortName evidence="1">RNA polymerase subunit beta''</shortName>
    </alternativeName>
</protein>
<dbReference type="EC" id="2.7.7.6" evidence="1"/>
<dbReference type="EMBL" id="AY916449">
    <property type="protein sequence ID" value="AAW82493.1"/>
    <property type="molecule type" value="Genomic_DNA"/>
</dbReference>
<dbReference type="RefSeq" id="YP_358566.2">
    <property type="nucleotide sequence ID" value="NC_007499.1"/>
</dbReference>
<dbReference type="SMR" id="Q3BAQ2"/>
<dbReference type="GeneID" id="3741668"/>
<dbReference type="GO" id="GO:0009507">
    <property type="term" value="C:chloroplast"/>
    <property type="evidence" value="ECO:0007669"/>
    <property type="project" value="UniProtKB-SubCell"/>
</dbReference>
<dbReference type="GO" id="GO:0000428">
    <property type="term" value="C:DNA-directed RNA polymerase complex"/>
    <property type="evidence" value="ECO:0007669"/>
    <property type="project" value="UniProtKB-KW"/>
</dbReference>
<dbReference type="GO" id="GO:0005739">
    <property type="term" value="C:mitochondrion"/>
    <property type="evidence" value="ECO:0007669"/>
    <property type="project" value="GOC"/>
</dbReference>
<dbReference type="GO" id="GO:0003677">
    <property type="term" value="F:DNA binding"/>
    <property type="evidence" value="ECO:0007669"/>
    <property type="project" value="UniProtKB-UniRule"/>
</dbReference>
<dbReference type="GO" id="GO:0003899">
    <property type="term" value="F:DNA-directed RNA polymerase activity"/>
    <property type="evidence" value="ECO:0007669"/>
    <property type="project" value="UniProtKB-UniRule"/>
</dbReference>
<dbReference type="GO" id="GO:0008270">
    <property type="term" value="F:zinc ion binding"/>
    <property type="evidence" value="ECO:0007669"/>
    <property type="project" value="UniProtKB-UniRule"/>
</dbReference>
<dbReference type="GO" id="GO:0006351">
    <property type="term" value="P:DNA-templated transcription"/>
    <property type="evidence" value="ECO:0007669"/>
    <property type="project" value="UniProtKB-UniRule"/>
</dbReference>
<dbReference type="CDD" id="cd02655">
    <property type="entry name" value="RNAP_beta'_C"/>
    <property type="match status" value="1"/>
</dbReference>
<dbReference type="FunFam" id="1.10.132.30:FF:000002">
    <property type="entry name" value="DNA-directed RNA polymerase subunit beta"/>
    <property type="match status" value="1"/>
</dbReference>
<dbReference type="Gene3D" id="1.10.132.30">
    <property type="match status" value="1"/>
</dbReference>
<dbReference type="Gene3D" id="1.10.150.390">
    <property type="match status" value="1"/>
</dbReference>
<dbReference type="Gene3D" id="1.10.1790.20">
    <property type="match status" value="1"/>
</dbReference>
<dbReference type="Gene3D" id="1.10.274.100">
    <property type="entry name" value="RNA polymerase Rpb1, domain 3"/>
    <property type="match status" value="1"/>
</dbReference>
<dbReference type="HAMAP" id="MF_01324">
    <property type="entry name" value="RNApol_bact_RpoC2"/>
    <property type="match status" value="1"/>
</dbReference>
<dbReference type="InterPro" id="IPR012756">
    <property type="entry name" value="DNA-dir_RpoC2_beta_pp"/>
</dbReference>
<dbReference type="InterPro" id="IPR050254">
    <property type="entry name" value="RNA_pol_beta''_euk"/>
</dbReference>
<dbReference type="InterPro" id="IPR042102">
    <property type="entry name" value="RNA_pol_Rpb1_3_sf"/>
</dbReference>
<dbReference type="InterPro" id="IPR007083">
    <property type="entry name" value="RNA_pol_Rpb1_4"/>
</dbReference>
<dbReference type="InterPro" id="IPR007081">
    <property type="entry name" value="RNA_pol_Rpb1_5"/>
</dbReference>
<dbReference type="InterPro" id="IPR038120">
    <property type="entry name" value="Rpb1_funnel_sf"/>
</dbReference>
<dbReference type="NCBIfam" id="TIGR02388">
    <property type="entry name" value="rpoC2_cyan"/>
    <property type="match status" value="1"/>
</dbReference>
<dbReference type="PANTHER" id="PTHR34995">
    <property type="entry name" value="DNA-DIRECTED RNA POLYMERASE SUBUNIT BETA"/>
    <property type="match status" value="1"/>
</dbReference>
<dbReference type="PANTHER" id="PTHR34995:SF1">
    <property type="entry name" value="DNA-DIRECTED RNA POLYMERASE SUBUNIT BETA"/>
    <property type="match status" value="1"/>
</dbReference>
<dbReference type="Pfam" id="PF05000">
    <property type="entry name" value="RNA_pol_Rpb1_4"/>
    <property type="match status" value="1"/>
</dbReference>
<dbReference type="Pfam" id="PF04998">
    <property type="entry name" value="RNA_pol_Rpb1_5"/>
    <property type="match status" value="2"/>
</dbReference>
<dbReference type="SUPFAM" id="SSF64484">
    <property type="entry name" value="beta and beta-prime subunits of DNA dependent RNA-polymerase"/>
    <property type="match status" value="1"/>
</dbReference>
<feature type="chain" id="PRO_0000225336" description="DNA-directed RNA polymerase subunit beta''">
    <location>
        <begin position="1"/>
        <end position="1388"/>
    </location>
</feature>
<feature type="binding site" evidence="1">
    <location>
        <position position="224"/>
    </location>
    <ligand>
        <name>Zn(2+)</name>
        <dbReference type="ChEBI" id="CHEBI:29105"/>
    </ligand>
</feature>
<feature type="binding site" evidence="1">
    <location>
        <position position="294"/>
    </location>
    <ligand>
        <name>Zn(2+)</name>
        <dbReference type="ChEBI" id="CHEBI:29105"/>
    </ligand>
</feature>
<feature type="binding site" evidence="1">
    <location>
        <position position="301"/>
    </location>
    <ligand>
        <name>Zn(2+)</name>
        <dbReference type="ChEBI" id="CHEBI:29105"/>
    </ligand>
</feature>
<feature type="binding site" evidence="1">
    <location>
        <position position="304"/>
    </location>
    <ligand>
        <name>Zn(2+)</name>
        <dbReference type="ChEBI" id="CHEBI:29105"/>
    </ligand>
</feature>
<geneLocation type="chloroplast"/>
<evidence type="ECO:0000255" key="1">
    <source>
        <dbReference type="HAMAP-Rule" id="MF_01324"/>
    </source>
</evidence>
<reference key="1">
    <citation type="journal article" date="2006" name="Mol. Biol. Evol.">
        <title>The chloroplast genome of Phalaenopsis aphrodite (Orchidaceae): comparative analysis of evolutionary rate with that of grasses and its phylogenetic implications.</title>
        <authorList>
            <person name="Chang C.-C."/>
            <person name="Lin H.-C."/>
            <person name="Lin I.-P."/>
            <person name="Chow T.-Y."/>
            <person name="Chen H.-H."/>
            <person name="Chen W.-H."/>
            <person name="Cheng C.-H."/>
            <person name="Lin C.-Y."/>
            <person name="Liu S.-M."/>
            <person name="Chang C.-C."/>
            <person name="Chaw S.-M."/>
        </authorList>
    </citation>
    <scope>NUCLEOTIDE SEQUENCE [LARGE SCALE GENOMIC DNA]</scope>
    <source>
        <strain>cv. Taisugar TS-97</strain>
    </source>
</reference>
<gene>
    <name evidence="1" type="primary">rpoC2</name>
</gene>
<organism>
    <name type="scientific">Phalaenopsis aphrodite subsp. formosana</name>
    <name type="common">Moth orchid</name>
    <dbReference type="NCBI Taxonomy" id="308872"/>
    <lineage>
        <taxon>Eukaryota</taxon>
        <taxon>Viridiplantae</taxon>
        <taxon>Streptophyta</taxon>
        <taxon>Embryophyta</taxon>
        <taxon>Tracheophyta</taxon>
        <taxon>Spermatophyta</taxon>
        <taxon>Magnoliopsida</taxon>
        <taxon>Liliopsida</taxon>
        <taxon>Asparagales</taxon>
        <taxon>Orchidaceae</taxon>
        <taxon>Epidendroideae</taxon>
        <taxon>Vandeae</taxon>
        <taxon>Aeridinae</taxon>
        <taxon>Phalaenopsis</taxon>
    </lineage>
</organism>
<name>RPOC2_PHAAO</name>
<keyword id="KW-0150">Chloroplast</keyword>
<keyword id="KW-0240">DNA-directed RNA polymerase</keyword>
<keyword id="KW-0479">Metal-binding</keyword>
<keyword id="KW-0548">Nucleotidyltransferase</keyword>
<keyword id="KW-0934">Plastid</keyword>
<keyword id="KW-0804">Transcription</keyword>
<keyword id="KW-0808">Transferase</keyword>
<keyword id="KW-0862">Zinc</keyword>
<sequence length="1388" mass="158314">MEVLMAERTNLVFHNKVIDGTAIKRLISRLIDHFGMAYTSHILDQVKALGLRRATATSISLGIDDLLTIPSKRWLVQDAEQQSFLLEKNHHYGNVHVVEKLRQSIEVWYATSEYLRQEMNPNFQMTDPSNPVHLMSFSGARGNASQVHQLVGMRGLMSDPQGQMIDLPIQSNLREGLSVTEYIISCYGARKGVVDTAVRTSDAGYLTRRLVEVVQHILVRRTDCGTIRGISVSPQNGMTEKIFVQTLIGRVLADDIYIGLRCIGTRNKDIGIGLVNRFITFQAHPIYIRTPFTCRSTSWICQLCYGRSPTHGDLVELGEAVGIIAGQSIGEPGTQLTLRTFHTGGVFTGGTAEHVRAPSNGKIKFDEGLVHPTRTRHGHPAFLCFIDFYVTIESRDIRHNVNIPTKSLILVQNDQYVESEQVIAEIRAETSTFHFKERVQKHIYSESEGEMHWSTDGYHTPKYPYSNVHLLPKTSHLWILAGGLCRSNSNIVSFSLHKDQDQMNANSFSLKDLFDLSLTNDQVRHKLLDTFGKKDRESLDYSKPYRIISKGHWNLIEPSTYIRQENSLAKKRRNRFVIPLQYDQEQENKLIPCFGISIKIPINGILRRNSIIAYFDDPRYRRSSSGITKYGIVEVDSIVKKEDLIEYRGAKDFSPKYQTQMKVDQFFFIPEEIHILPGSSPIMVRNNSIIGVDTRLVLNINTRSRVGGLVRVERKKKSLELKIFSGDIHFYGEVDKISRHSGILIPPGIGKKDSKGSKKLKNWIYVQRITPTKKKYFVLVRPVVTYEIADGINLATLFSQDLLQEKNNVQLRIVNYILYENGKSIRGISHTSIQLVRACLVLTWDQEKKSSIEEKVHASFVEIRTNDLLCYFIRIELVKSTLSYTEKRYDTAGSGLISNNELDRIHRKNPFDSKAKIQIFPQHQGTLGTLLNRNKECQSFLILSSSNCSRIGPFNTSRYNNATKELDPMTPIRYLLGPLGTIVPRIVNSRSSYYLRTYNQVFLKKSFLLENFQQTFQVLQVPPFQYCFLDENSRIYNPDPCSNIIWNSFHLNWCFLHHDSCEEAWPIISLGQFLCENVYLLKYGSRIKKSGQIFIVHVDSLVIRSAKPYLVTPGATVHGHYGETFYEGDTLITFIYEKSRSGDITQGLPKVEQILEVRSIDSISMNLERRVEGWDERIRRILGIPWGFLIGAELTIAQSRISLVNKIQKVYRSQGVQIHNRHLEIIVRQVTSRVLVSEDGMSNVFLPGEFIGLLRAERAGRVLAESICYRAILLGITKSSLNTQSFISEASFQETARVLAKAALRGRIDWLKGLKENVVLGGIIPVGTGFNKLVHRSKQDKNIHLKIKRKNLFELEMSDILLHHRELFCSCAQELSMRHQTNLLRNVS</sequence>
<proteinExistence type="inferred from homology"/>